<feature type="chain" id="PRO_1000134324" description="Small ribosomal subunit protein bS16">
    <location>
        <begin position="1"/>
        <end position="90"/>
    </location>
</feature>
<name>RS16_STRE4</name>
<reference key="1">
    <citation type="journal article" date="2009" name="PLoS Pathog.">
        <title>Genomic evidence for the evolution of Streptococcus equi: host restriction, increased virulence, and genetic exchange with human pathogens.</title>
        <authorList>
            <person name="Holden M.T.G."/>
            <person name="Heather Z."/>
            <person name="Paillot R."/>
            <person name="Steward K.F."/>
            <person name="Webb K."/>
            <person name="Ainslie F."/>
            <person name="Jourdan T."/>
            <person name="Bason N.C."/>
            <person name="Holroyd N.E."/>
            <person name="Mungall K."/>
            <person name="Quail M.A."/>
            <person name="Sanders M."/>
            <person name="Simmonds M."/>
            <person name="Willey D."/>
            <person name="Brooks K."/>
            <person name="Aanensen D.M."/>
            <person name="Spratt B.G."/>
            <person name="Jolley K.A."/>
            <person name="Maiden M.C.J."/>
            <person name="Kehoe M."/>
            <person name="Chanter N."/>
            <person name="Bentley S.D."/>
            <person name="Robinson C."/>
            <person name="Maskell D.J."/>
            <person name="Parkhill J."/>
            <person name="Waller A.S."/>
        </authorList>
    </citation>
    <scope>NUCLEOTIDE SEQUENCE [LARGE SCALE GENOMIC DNA]</scope>
    <source>
        <strain>4047</strain>
    </source>
</reference>
<proteinExistence type="inferred from homology"/>
<keyword id="KW-0687">Ribonucleoprotein</keyword>
<keyword id="KW-0689">Ribosomal protein</keyword>
<dbReference type="EMBL" id="FM204883">
    <property type="protein sequence ID" value="CAW94087.1"/>
    <property type="molecule type" value="Genomic_DNA"/>
</dbReference>
<dbReference type="RefSeq" id="WP_012677856.1">
    <property type="nucleotide sequence ID" value="NC_012471.1"/>
</dbReference>
<dbReference type="SMR" id="C0M751"/>
<dbReference type="KEGG" id="seu:SEQ_1308"/>
<dbReference type="HOGENOM" id="CLU_100590_5_0_9"/>
<dbReference type="OrthoDB" id="9807878at2"/>
<dbReference type="Proteomes" id="UP000001365">
    <property type="component" value="Chromosome"/>
</dbReference>
<dbReference type="GO" id="GO:0005737">
    <property type="term" value="C:cytoplasm"/>
    <property type="evidence" value="ECO:0007669"/>
    <property type="project" value="UniProtKB-ARBA"/>
</dbReference>
<dbReference type="GO" id="GO:0015935">
    <property type="term" value="C:small ribosomal subunit"/>
    <property type="evidence" value="ECO:0007669"/>
    <property type="project" value="TreeGrafter"/>
</dbReference>
<dbReference type="GO" id="GO:0003735">
    <property type="term" value="F:structural constituent of ribosome"/>
    <property type="evidence" value="ECO:0007669"/>
    <property type="project" value="InterPro"/>
</dbReference>
<dbReference type="GO" id="GO:0006412">
    <property type="term" value="P:translation"/>
    <property type="evidence" value="ECO:0007669"/>
    <property type="project" value="UniProtKB-UniRule"/>
</dbReference>
<dbReference type="FunFam" id="3.30.1320.10:FF:000002">
    <property type="entry name" value="30S ribosomal protein S16"/>
    <property type="match status" value="1"/>
</dbReference>
<dbReference type="Gene3D" id="3.30.1320.10">
    <property type="match status" value="1"/>
</dbReference>
<dbReference type="HAMAP" id="MF_00385">
    <property type="entry name" value="Ribosomal_bS16"/>
    <property type="match status" value="1"/>
</dbReference>
<dbReference type="InterPro" id="IPR000307">
    <property type="entry name" value="Ribosomal_bS16"/>
</dbReference>
<dbReference type="InterPro" id="IPR023803">
    <property type="entry name" value="Ribosomal_bS16_dom_sf"/>
</dbReference>
<dbReference type="NCBIfam" id="TIGR00002">
    <property type="entry name" value="S16"/>
    <property type="match status" value="1"/>
</dbReference>
<dbReference type="PANTHER" id="PTHR12919">
    <property type="entry name" value="30S RIBOSOMAL PROTEIN S16"/>
    <property type="match status" value="1"/>
</dbReference>
<dbReference type="PANTHER" id="PTHR12919:SF20">
    <property type="entry name" value="SMALL RIBOSOMAL SUBUNIT PROTEIN BS16M"/>
    <property type="match status" value="1"/>
</dbReference>
<dbReference type="Pfam" id="PF00886">
    <property type="entry name" value="Ribosomal_S16"/>
    <property type="match status" value="1"/>
</dbReference>
<dbReference type="SUPFAM" id="SSF54565">
    <property type="entry name" value="Ribosomal protein S16"/>
    <property type="match status" value="1"/>
</dbReference>
<gene>
    <name evidence="1" type="primary">rpsP</name>
    <name type="ordered locus">SEQ_1308</name>
</gene>
<protein>
    <recommendedName>
        <fullName evidence="1">Small ribosomal subunit protein bS16</fullName>
    </recommendedName>
    <alternativeName>
        <fullName evidence="2">30S ribosomal protein S16</fullName>
    </alternativeName>
</protein>
<sequence length="90" mass="10167">MAVKIRLTRMGSKKKPFYRINVADSRAPRDGRFIETVGTYNPLVAENQVTLKEDRVLDWLGKGAQPSDTVRSLLSKAGVMAKFHDQKFSK</sequence>
<evidence type="ECO:0000255" key="1">
    <source>
        <dbReference type="HAMAP-Rule" id="MF_00385"/>
    </source>
</evidence>
<evidence type="ECO:0000305" key="2"/>
<organism>
    <name type="scientific">Streptococcus equi subsp. equi (strain 4047)</name>
    <dbReference type="NCBI Taxonomy" id="553482"/>
    <lineage>
        <taxon>Bacteria</taxon>
        <taxon>Bacillati</taxon>
        <taxon>Bacillota</taxon>
        <taxon>Bacilli</taxon>
        <taxon>Lactobacillales</taxon>
        <taxon>Streptococcaceae</taxon>
        <taxon>Streptococcus</taxon>
    </lineage>
</organism>
<comment type="similarity">
    <text evidence="1">Belongs to the bacterial ribosomal protein bS16 family.</text>
</comment>
<accession>C0M751</accession>